<organism>
    <name type="scientific">Drosophila melanogaster</name>
    <name type="common">Fruit fly</name>
    <dbReference type="NCBI Taxonomy" id="7227"/>
    <lineage>
        <taxon>Eukaryota</taxon>
        <taxon>Metazoa</taxon>
        <taxon>Ecdysozoa</taxon>
        <taxon>Arthropoda</taxon>
        <taxon>Hexapoda</taxon>
        <taxon>Insecta</taxon>
        <taxon>Pterygota</taxon>
        <taxon>Neoptera</taxon>
        <taxon>Endopterygota</taxon>
        <taxon>Diptera</taxon>
        <taxon>Brachycera</taxon>
        <taxon>Muscomorpha</taxon>
        <taxon>Ephydroidea</taxon>
        <taxon>Drosophilidae</taxon>
        <taxon>Drosophila</taxon>
        <taxon>Sophophora</taxon>
    </lineage>
</organism>
<evidence type="ECO:0000255" key="1"/>
<evidence type="ECO:0000269" key="2">
    <source>
    </source>
</evidence>
<evidence type="ECO:0000269" key="3">
    <source>
    </source>
</evidence>
<evidence type="ECO:0000269" key="4">
    <source>
    </source>
</evidence>
<evidence type="ECO:0000305" key="5"/>
<protein>
    <recommendedName>
        <fullName>Chaoptin</fullName>
    </recommendedName>
    <alternativeName>
        <fullName>Photoreceptor cell-specific membrane protein</fullName>
    </alternativeName>
</protein>
<sequence>MGLEFFFKFGYAFLTITLMIMIWMSLARASMFDREMEETHYPPCTYNVMCTCSKSSTDLGIVHCKNVPFPALPRMVNQSKVFMLHMENTGLREIEPYFLQSTGMYRLKISGNHLTEIPDDAFTGLERSLWELILPQNDLVEIPSKSLRHLQKLRHLDLGYNHITHIQHDSFRGLEDSLQTLILRENCISQLMSHSFSGLLILETLDLSGNNLFEIDPNVFVDGMPRLTRLLLTDNILSEIPYDALGPLKSLRTLDISHNVIWSLSGNETYEIKASTKLNLDNLHLEYNHIEVLPPNSFKYFDTVNRTFFDGNPIHTLREDAFKPARIREIYMRYCGLTNISPVAFDSLVNSLQILDLSGNNLTKLHHKLFNNFDVLRVISMRDNKIKIQKPTETFNAVHYTLLKLDLSGDRNDPTNLQTLRNMTRMRNMRSLSISRLGSSSVGPEDFKDFGVELEDLQITRASLSGIQSHAFKHVRGLKRLDFSENGISSIENDAFHEIGHSLISLKMSHGYSGSALPAEPLRHLTSLQELDFSNNHISSMSDTSFHFLKNLRLLELHDNRIEQVLKGTFQGDIHSKLEEISLRFNHLTSISQHTFFDLEALRKLHLDDNKIDKIERRAFMNLDELEYLSLRGNKINNLADESFQNLPKLEILDMAFNQLPNFNFDYFDQVGTLSNLNVNVSHNQIRQLMYNSSWSGRNEHGGMYHSNIKILDLSHNNISIIHPGYFRPAEISLTHLHLGYNSLMNTTRDVFGNMPHLQWLDLSYNWIHELDFDAFKNTKQLQLVFFGHNYLSDIPQDIFKPVQGLRIVDFSHNHLRGLPDNLFYNGGMEKLDVSHNMMLKIPSSSLSSLAALTLCELHLSNNFISTIHSMDLSNKFRSLRYLDISYNYLLRIDDAVFATMPKLAVLDLSHNRDLKVMDKSFMGLENSLIKLGLENISLSTVPEIRLKYLREFRLGYNELPSIPQELAHNMSNLRMLDLSNNDLTNVPLMTQALPHLRRLMLSGNPITSLNNNSFDGVNEDLEMLDISNFRLHYFEYGCLDSLPHLRSLKLTAYSHLEHFNIPHLLRHHYNIRQLWIEAPQPFTRIVKKGSGPTQEMQTLQLGNPTDLQREMEGHLPSKLTNITFSGPQFTNLNERILRGMRSPYLYMQLFNTSLQALPPNFFKYMGRVRNISLDIRYHNRNLKKIPNPNTGAVPYLPNSVFLTDLKMSHTDLNCDCDLGWVEFWQRKRRQYICSSQTWTDTVFRTFMNSPCQVYGRHNCDEHDDDLRETRCENKGGQQLMEALKFDLECGWDNANCREAAFVVVMVCVAMVFWM</sequence>
<name>CHAO_DROME</name>
<comment type="function">
    <text evidence="3">Required for photoreceptor cell morphogenesis. Mediates homophilic cellular adhesion.</text>
</comment>
<comment type="subcellular location">
    <subcellularLocation>
        <location>Cell membrane</location>
        <topology>Peripheral membrane protein</topology>
        <orientation>Extracellular side</orientation>
    </subcellularLocation>
    <text>Extracellular surface of R-cell plasma membrane.</text>
</comment>
<comment type="tissue specificity">
    <text evidence="4">Expressed in photoreceptor cells and their axons in the adult retina, the ocellus and larval photoreceptor organ.</text>
</comment>
<comment type="developmental stage">
    <text>Expressed 24 hours after initiation of photoreceptor cell differentiation, persists through development to adulthood.</text>
</comment>
<comment type="similarity">
    <text evidence="5">Belongs to the chaoptin family.</text>
</comment>
<comment type="sequence caution" evidence="5">
    <conflict type="frameshift">
        <sequence resource="EMBL-CDS" id="AAA28425"/>
    </conflict>
</comment>
<accession>P12024</accession>
<accession>Q9VA01</accession>
<dbReference type="EMBL" id="M19017">
    <property type="protein sequence ID" value="AAA28425.1"/>
    <property type="status" value="ALT_FRAME"/>
    <property type="molecule type" value="Genomic_DNA"/>
</dbReference>
<dbReference type="EMBL" id="M19008">
    <property type="protein sequence ID" value="AAA28425.1"/>
    <property type="status" value="JOINED"/>
    <property type="molecule type" value="Genomic_DNA"/>
</dbReference>
<dbReference type="EMBL" id="M19009">
    <property type="protein sequence ID" value="AAA28425.1"/>
    <property type="status" value="JOINED"/>
    <property type="molecule type" value="Genomic_DNA"/>
</dbReference>
<dbReference type="EMBL" id="M19010">
    <property type="protein sequence ID" value="AAA28425.1"/>
    <property type="status" value="JOINED"/>
    <property type="molecule type" value="Genomic_DNA"/>
</dbReference>
<dbReference type="EMBL" id="M19011">
    <property type="protein sequence ID" value="AAA28425.1"/>
    <property type="status" value="JOINED"/>
    <property type="molecule type" value="Genomic_DNA"/>
</dbReference>
<dbReference type="EMBL" id="M19012">
    <property type="protein sequence ID" value="AAA28425.1"/>
    <property type="status" value="JOINED"/>
    <property type="molecule type" value="Genomic_DNA"/>
</dbReference>
<dbReference type="EMBL" id="M19013">
    <property type="protein sequence ID" value="AAA28425.1"/>
    <property type="status" value="JOINED"/>
    <property type="molecule type" value="Genomic_DNA"/>
</dbReference>
<dbReference type="EMBL" id="M19014">
    <property type="protein sequence ID" value="AAA28425.1"/>
    <property type="status" value="JOINED"/>
    <property type="molecule type" value="Genomic_DNA"/>
</dbReference>
<dbReference type="EMBL" id="M19016">
    <property type="protein sequence ID" value="AAA28425.1"/>
    <property type="status" value="JOINED"/>
    <property type="molecule type" value="Genomic_DNA"/>
</dbReference>
<dbReference type="EMBL" id="AE014297">
    <property type="protein sequence ID" value="AAF57127.1"/>
    <property type="molecule type" value="Genomic_DNA"/>
</dbReference>
<dbReference type="EMBL" id="K03274">
    <property type="protein sequence ID" value="AAA28851.1"/>
    <property type="molecule type" value="Genomic_DNA"/>
</dbReference>
<dbReference type="PIR" id="A29944">
    <property type="entry name" value="A29944"/>
</dbReference>
<dbReference type="RefSeq" id="NP_524605.1">
    <property type="nucleotide sequence ID" value="NM_079866.3"/>
</dbReference>
<dbReference type="SMR" id="P12024"/>
<dbReference type="BioGRID" id="68535">
    <property type="interactions" value="5"/>
</dbReference>
<dbReference type="FunCoup" id="P12024">
    <property type="interactions" value="8"/>
</dbReference>
<dbReference type="IntAct" id="P12024">
    <property type="interactions" value="2"/>
</dbReference>
<dbReference type="STRING" id="7227.FBpp0303134"/>
<dbReference type="GlyCosmos" id="P12024">
    <property type="glycosylation" value="15 sites, No reported glycans"/>
</dbReference>
<dbReference type="GlyGen" id="P12024">
    <property type="glycosylation" value="16 sites"/>
</dbReference>
<dbReference type="iPTMnet" id="P12024"/>
<dbReference type="PaxDb" id="7227-FBpp0085139"/>
<dbReference type="DNASU" id="43690"/>
<dbReference type="EnsemblMetazoa" id="FBtr0085778">
    <property type="protein sequence ID" value="FBpp0085139"/>
    <property type="gene ID" value="FBgn0267435"/>
</dbReference>
<dbReference type="GeneID" id="43690"/>
<dbReference type="KEGG" id="dme:Dmel_CG1744"/>
<dbReference type="AGR" id="FB:FBgn0267435"/>
<dbReference type="CTD" id="43690"/>
<dbReference type="FlyBase" id="FBgn0267435">
    <property type="gene designation" value="chp"/>
</dbReference>
<dbReference type="VEuPathDB" id="VectorBase:FBgn0267435"/>
<dbReference type="eggNOG" id="KOG0619">
    <property type="taxonomic scope" value="Eukaryota"/>
</dbReference>
<dbReference type="GeneTree" id="ENSGT00940000164586"/>
<dbReference type="HOGENOM" id="CLU_006060_0_0_1"/>
<dbReference type="InParanoid" id="P12024"/>
<dbReference type="OrthoDB" id="1111193at2759"/>
<dbReference type="PhylomeDB" id="P12024"/>
<dbReference type="Reactome" id="R-DME-388844">
    <property type="pathway name" value="Receptor-type tyrosine-protein phosphatases"/>
</dbReference>
<dbReference type="BioGRID-ORCS" id="43690">
    <property type="hits" value="0 hits in 1 CRISPR screen"/>
</dbReference>
<dbReference type="ChiTaRS" id="chp">
    <property type="organism name" value="fly"/>
</dbReference>
<dbReference type="GenomeRNAi" id="43690"/>
<dbReference type="PRO" id="PR:P12024"/>
<dbReference type="Proteomes" id="UP000000803">
    <property type="component" value="Chromosome 3R"/>
</dbReference>
<dbReference type="Bgee" id="FBgn0267435">
    <property type="expression patterns" value="Expressed in outer photoreceptor cell (Drosophila) in insect head and 60 other cell types or tissues"/>
</dbReference>
<dbReference type="ExpressionAtlas" id="P12024">
    <property type="expression patterns" value="baseline and differential"/>
</dbReference>
<dbReference type="GO" id="GO:0005886">
    <property type="term" value="C:plasma membrane"/>
    <property type="evidence" value="ECO:0000314"/>
    <property type="project" value="FlyBase"/>
</dbReference>
<dbReference type="GO" id="GO:0016028">
    <property type="term" value="C:rhabdomere"/>
    <property type="evidence" value="ECO:0000314"/>
    <property type="project" value="FlyBase"/>
</dbReference>
<dbReference type="GO" id="GO:0035996">
    <property type="term" value="C:rhabdomere microvillus"/>
    <property type="evidence" value="ECO:0000314"/>
    <property type="project" value="FlyBase"/>
</dbReference>
<dbReference type="GO" id="GO:0007156">
    <property type="term" value="P:homophilic cell adhesion via plasma membrane adhesion molecules"/>
    <property type="evidence" value="ECO:0000314"/>
    <property type="project" value="FlyBase"/>
</dbReference>
<dbReference type="GO" id="GO:0032528">
    <property type="term" value="P:microvillus organization"/>
    <property type="evidence" value="ECO:0000315"/>
    <property type="project" value="FlyBase"/>
</dbReference>
<dbReference type="GO" id="GO:0042052">
    <property type="term" value="P:rhabdomere development"/>
    <property type="evidence" value="ECO:0000315"/>
    <property type="project" value="FlyBase"/>
</dbReference>
<dbReference type="GO" id="GO:0007601">
    <property type="term" value="P:visual perception"/>
    <property type="evidence" value="ECO:0007669"/>
    <property type="project" value="UniProtKB-KW"/>
</dbReference>
<dbReference type="FunFam" id="3.80.10.10:FF:000852">
    <property type="entry name" value="Blast:Chaoptin"/>
    <property type="match status" value="1"/>
</dbReference>
<dbReference type="FunFam" id="3.80.10.10:FF:001167">
    <property type="entry name" value="Chaoptin"/>
    <property type="match status" value="1"/>
</dbReference>
<dbReference type="FunFam" id="3.80.10.10:FF:001035">
    <property type="entry name" value="GH20134p"/>
    <property type="match status" value="1"/>
</dbReference>
<dbReference type="FunFam" id="3.80.10.10:FF:001373">
    <property type="entry name" value="GH20134p"/>
    <property type="match status" value="1"/>
</dbReference>
<dbReference type="FunFam" id="3.80.10.10:FF:000853">
    <property type="entry name" value="GL13952"/>
    <property type="match status" value="1"/>
</dbReference>
<dbReference type="Gene3D" id="3.80.10.10">
    <property type="entry name" value="Ribonuclease Inhibitor"/>
    <property type="match status" value="7"/>
</dbReference>
<dbReference type="InterPro" id="IPR000225">
    <property type="entry name" value="Armadillo"/>
</dbReference>
<dbReference type="InterPro" id="IPR001611">
    <property type="entry name" value="Leu-rich_rpt"/>
</dbReference>
<dbReference type="InterPro" id="IPR003591">
    <property type="entry name" value="Leu-rich_rpt_typical-subtyp"/>
</dbReference>
<dbReference type="InterPro" id="IPR032675">
    <property type="entry name" value="LRR_dom_sf"/>
</dbReference>
<dbReference type="PANTHER" id="PTHR45617">
    <property type="entry name" value="LEUCINE RICH REPEAT FAMILY PROTEIN"/>
    <property type="match status" value="1"/>
</dbReference>
<dbReference type="PANTHER" id="PTHR45617:SF181">
    <property type="entry name" value="LP04042P"/>
    <property type="match status" value="1"/>
</dbReference>
<dbReference type="Pfam" id="PF00560">
    <property type="entry name" value="LRR_1"/>
    <property type="match status" value="1"/>
</dbReference>
<dbReference type="Pfam" id="PF13855">
    <property type="entry name" value="LRR_8"/>
    <property type="match status" value="10"/>
</dbReference>
<dbReference type="PRINTS" id="PR00019">
    <property type="entry name" value="LEURICHRPT"/>
</dbReference>
<dbReference type="SMART" id="SM00365">
    <property type="entry name" value="LRR_SD22"/>
    <property type="match status" value="12"/>
</dbReference>
<dbReference type="SMART" id="SM00369">
    <property type="entry name" value="LRR_TYP"/>
    <property type="match status" value="27"/>
</dbReference>
<dbReference type="SUPFAM" id="SSF52058">
    <property type="entry name" value="L domain-like"/>
    <property type="match status" value="3"/>
</dbReference>
<dbReference type="SUPFAM" id="SSF52047">
    <property type="entry name" value="RNI-like"/>
    <property type="match status" value="1"/>
</dbReference>
<dbReference type="PROSITE" id="PS51450">
    <property type="entry name" value="LRR"/>
    <property type="match status" value="29"/>
</dbReference>
<proteinExistence type="evidence at protein level"/>
<keyword id="KW-0130">Cell adhesion</keyword>
<keyword id="KW-1003">Cell membrane</keyword>
<keyword id="KW-0903">Direct protein sequencing</keyword>
<keyword id="KW-0325">Glycoprotein</keyword>
<keyword id="KW-0433">Leucine-rich repeat</keyword>
<keyword id="KW-0472">Membrane</keyword>
<keyword id="KW-1185">Reference proteome</keyword>
<keyword id="KW-0677">Repeat</keyword>
<keyword id="KW-0716">Sensory transduction</keyword>
<keyword id="KW-0732">Signal</keyword>
<keyword id="KW-0844">Vision</keyword>
<reference key="1">
    <citation type="journal article" date="1988" name="Cell">
        <title>Chaoptin, a cell surface glycoprotein required for Drosophila photoreceptor cell morphogenesis, contains a repeat motif found in yeast and human.</title>
        <authorList>
            <person name="Reinke R."/>
            <person name="Krantz D.E."/>
            <person name="Yen D."/>
            <person name="Zipursky S.L."/>
        </authorList>
    </citation>
    <scope>NUCLEOTIDE SEQUENCE [GENOMIC DNA]</scope>
    <source>
        <tissue>Head</tissue>
    </source>
</reference>
<reference key="2">
    <citation type="journal article" date="2000" name="Science">
        <title>The genome sequence of Drosophila melanogaster.</title>
        <authorList>
            <person name="Adams M.D."/>
            <person name="Celniker S.E."/>
            <person name="Holt R.A."/>
            <person name="Evans C.A."/>
            <person name="Gocayne J.D."/>
            <person name="Amanatides P.G."/>
            <person name="Scherer S.E."/>
            <person name="Li P.W."/>
            <person name="Hoskins R.A."/>
            <person name="Galle R.F."/>
            <person name="George R.A."/>
            <person name="Lewis S.E."/>
            <person name="Richards S."/>
            <person name="Ashburner M."/>
            <person name="Henderson S.N."/>
            <person name="Sutton G.G."/>
            <person name="Wortman J.R."/>
            <person name="Yandell M.D."/>
            <person name="Zhang Q."/>
            <person name="Chen L.X."/>
            <person name="Brandon R.C."/>
            <person name="Rogers Y.-H.C."/>
            <person name="Blazej R.G."/>
            <person name="Champe M."/>
            <person name="Pfeiffer B.D."/>
            <person name="Wan K.H."/>
            <person name="Doyle C."/>
            <person name="Baxter E.G."/>
            <person name="Helt G."/>
            <person name="Nelson C.R."/>
            <person name="Miklos G.L.G."/>
            <person name="Abril J.F."/>
            <person name="Agbayani A."/>
            <person name="An H.-J."/>
            <person name="Andrews-Pfannkoch C."/>
            <person name="Baldwin D."/>
            <person name="Ballew R.M."/>
            <person name="Basu A."/>
            <person name="Baxendale J."/>
            <person name="Bayraktaroglu L."/>
            <person name="Beasley E.M."/>
            <person name="Beeson K.Y."/>
            <person name="Benos P.V."/>
            <person name="Berman B.P."/>
            <person name="Bhandari D."/>
            <person name="Bolshakov S."/>
            <person name="Borkova D."/>
            <person name="Botchan M.R."/>
            <person name="Bouck J."/>
            <person name="Brokstein P."/>
            <person name="Brottier P."/>
            <person name="Burtis K.C."/>
            <person name="Busam D.A."/>
            <person name="Butler H."/>
            <person name="Cadieu E."/>
            <person name="Center A."/>
            <person name="Chandra I."/>
            <person name="Cherry J.M."/>
            <person name="Cawley S."/>
            <person name="Dahlke C."/>
            <person name="Davenport L.B."/>
            <person name="Davies P."/>
            <person name="de Pablos B."/>
            <person name="Delcher A."/>
            <person name="Deng Z."/>
            <person name="Mays A.D."/>
            <person name="Dew I."/>
            <person name="Dietz S.M."/>
            <person name="Dodson K."/>
            <person name="Doup L.E."/>
            <person name="Downes M."/>
            <person name="Dugan-Rocha S."/>
            <person name="Dunkov B.C."/>
            <person name="Dunn P."/>
            <person name="Durbin K.J."/>
            <person name="Evangelista C.C."/>
            <person name="Ferraz C."/>
            <person name="Ferriera S."/>
            <person name="Fleischmann W."/>
            <person name="Fosler C."/>
            <person name="Gabrielian A.E."/>
            <person name="Garg N.S."/>
            <person name="Gelbart W.M."/>
            <person name="Glasser K."/>
            <person name="Glodek A."/>
            <person name="Gong F."/>
            <person name="Gorrell J.H."/>
            <person name="Gu Z."/>
            <person name="Guan P."/>
            <person name="Harris M."/>
            <person name="Harris N.L."/>
            <person name="Harvey D.A."/>
            <person name="Heiman T.J."/>
            <person name="Hernandez J.R."/>
            <person name="Houck J."/>
            <person name="Hostin D."/>
            <person name="Houston K.A."/>
            <person name="Howland T.J."/>
            <person name="Wei M.-H."/>
            <person name="Ibegwam C."/>
            <person name="Jalali M."/>
            <person name="Kalush F."/>
            <person name="Karpen G.H."/>
            <person name="Ke Z."/>
            <person name="Kennison J.A."/>
            <person name="Ketchum K.A."/>
            <person name="Kimmel B.E."/>
            <person name="Kodira C.D."/>
            <person name="Kraft C.L."/>
            <person name="Kravitz S."/>
            <person name="Kulp D."/>
            <person name="Lai Z."/>
            <person name="Lasko P."/>
            <person name="Lei Y."/>
            <person name="Levitsky A.A."/>
            <person name="Li J.H."/>
            <person name="Li Z."/>
            <person name="Liang Y."/>
            <person name="Lin X."/>
            <person name="Liu X."/>
            <person name="Mattei B."/>
            <person name="McIntosh T.C."/>
            <person name="McLeod M.P."/>
            <person name="McPherson D."/>
            <person name="Merkulov G."/>
            <person name="Milshina N.V."/>
            <person name="Mobarry C."/>
            <person name="Morris J."/>
            <person name="Moshrefi A."/>
            <person name="Mount S.M."/>
            <person name="Moy M."/>
            <person name="Murphy B."/>
            <person name="Murphy L."/>
            <person name="Muzny D.M."/>
            <person name="Nelson D.L."/>
            <person name="Nelson D.R."/>
            <person name="Nelson K.A."/>
            <person name="Nixon K."/>
            <person name="Nusskern D.R."/>
            <person name="Pacleb J.M."/>
            <person name="Palazzolo M."/>
            <person name="Pittman G.S."/>
            <person name="Pan S."/>
            <person name="Pollard J."/>
            <person name="Puri V."/>
            <person name="Reese M.G."/>
            <person name="Reinert K."/>
            <person name="Remington K."/>
            <person name="Saunders R.D.C."/>
            <person name="Scheeler F."/>
            <person name="Shen H."/>
            <person name="Shue B.C."/>
            <person name="Siden-Kiamos I."/>
            <person name="Simpson M."/>
            <person name="Skupski M.P."/>
            <person name="Smith T.J."/>
            <person name="Spier E."/>
            <person name="Spradling A.C."/>
            <person name="Stapleton M."/>
            <person name="Strong R."/>
            <person name="Sun E."/>
            <person name="Svirskas R."/>
            <person name="Tector C."/>
            <person name="Turner R."/>
            <person name="Venter E."/>
            <person name="Wang A.H."/>
            <person name="Wang X."/>
            <person name="Wang Z.-Y."/>
            <person name="Wassarman D.A."/>
            <person name="Weinstock G.M."/>
            <person name="Weissenbach J."/>
            <person name="Williams S.M."/>
            <person name="Woodage T."/>
            <person name="Worley K.C."/>
            <person name="Wu D."/>
            <person name="Yang S."/>
            <person name="Yao Q.A."/>
            <person name="Ye J."/>
            <person name="Yeh R.-F."/>
            <person name="Zaveri J.S."/>
            <person name="Zhan M."/>
            <person name="Zhang G."/>
            <person name="Zhao Q."/>
            <person name="Zheng L."/>
            <person name="Zheng X.H."/>
            <person name="Zhong F.N."/>
            <person name="Zhong W."/>
            <person name="Zhou X."/>
            <person name="Zhu S.C."/>
            <person name="Zhu X."/>
            <person name="Smith H.O."/>
            <person name="Gibbs R.A."/>
            <person name="Myers E.W."/>
            <person name="Rubin G.M."/>
            <person name="Venter J.C."/>
        </authorList>
    </citation>
    <scope>NUCLEOTIDE SEQUENCE [LARGE SCALE GENOMIC DNA]</scope>
    <source>
        <strain>Berkeley</strain>
    </source>
</reference>
<reference key="3">
    <citation type="journal article" date="2002" name="Genome Biol.">
        <title>Annotation of the Drosophila melanogaster euchromatic genome: a systematic review.</title>
        <authorList>
            <person name="Misra S."/>
            <person name="Crosby M.A."/>
            <person name="Mungall C.J."/>
            <person name="Matthews B.B."/>
            <person name="Campbell K.S."/>
            <person name="Hradecky P."/>
            <person name="Huang Y."/>
            <person name="Kaminker J.S."/>
            <person name="Millburn G.H."/>
            <person name="Prochnik S.E."/>
            <person name="Smith C.D."/>
            <person name="Tupy J.L."/>
            <person name="Whitfield E.J."/>
            <person name="Bayraktaroglu L."/>
            <person name="Berman B.P."/>
            <person name="Bettencourt B.R."/>
            <person name="Celniker S.E."/>
            <person name="de Grey A.D.N.J."/>
            <person name="Drysdale R.A."/>
            <person name="Harris N.L."/>
            <person name="Richter J."/>
            <person name="Russo S."/>
            <person name="Schroeder A.J."/>
            <person name="Shu S.Q."/>
            <person name="Stapleton M."/>
            <person name="Yamada C."/>
            <person name="Ashburner M."/>
            <person name="Gelbart W.M."/>
            <person name="Rubin G.M."/>
            <person name="Lewis S.E."/>
        </authorList>
    </citation>
    <scope>GENOME REANNOTATION</scope>
    <source>
        <strain>Berkeley</strain>
    </source>
</reference>
<reference key="4">
    <citation type="journal article" date="1985" name="Proc. Natl. Acad. Sci. U.S.A.">
        <title>From monoclonal antibody to gene for a neuron-specific glycoprotein in Drosophila.</title>
        <authorList>
            <person name="Zipursky S.L."/>
            <person name="Venkatesh T.R."/>
            <person name="Benzer S."/>
        </authorList>
    </citation>
    <scope>NUCLEOTIDE SEQUENCE [GENOMIC DNA] OF 30-50</scope>
    <source>
        <tissue>Head</tissue>
    </source>
</reference>
<reference key="5">
    <citation type="journal article" date="1984" name="Cell">
        <title>Neuronal development in the Drosophila retina: monoclonal antibodies as molecular probes.</title>
        <authorList>
            <person name="Zipursky S.L."/>
            <person name="Venkatesh T.R."/>
            <person name="Teplow D.B."/>
            <person name="Benzer S."/>
        </authorList>
    </citation>
    <scope>PROTEIN SEQUENCE OF 30-50</scope>
    <scope>TISSUE SPECIFICITY</scope>
    <source>
        <strain>Canton-S</strain>
        <tissue>Head</tissue>
    </source>
</reference>
<reference key="6">
    <citation type="journal article" date="2007" name="Glycobiology">
        <title>Identification of N-glycosylated proteins from the central nervous system of Drosophila melanogaster.</title>
        <authorList>
            <person name="Koles K."/>
            <person name="Lim J.-M."/>
            <person name="Aoki K."/>
            <person name="Porterfield M."/>
            <person name="Tiemeyer M."/>
            <person name="Wells L."/>
            <person name="Panin V."/>
        </authorList>
    </citation>
    <scope>GLYCOSYLATION [LARGE SCALE ANALYSIS] AT ASN-305; ASN-692; ASN-936; ASN-1122 AND ASN-1171</scope>
    <scope>IDENTIFICATION BY MASS SPECTROMETRY</scope>
    <source>
        <strain>Oregon-R</strain>
        <tissue>Head</tissue>
    </source>
</reference>
<reference key="7">
    <citation type="journal article" date="2009" name="PLoS ONE">
        <title>Insight into the regulation of glycan synthesis in Drosophila chaoptin based on mass spectrometry.</title>
        <authorList>
            <person name="Kanie Y."/>
            <person name="Yamamoto-Hino M."/>
            <person name="Karino Y."/>
            <person name="Yokozawa H."/>
            <person name="Nishihara S."/>
            <person name="Ueda R."/>
            <person name="Goto S."/>
            <person name="Kanie O."/>
        </authorList>
    </citation>
    <scope>GLYCOSYLATION AT ASN-77; ASN-267; ASN-305; ASN-361; ASN-422; ASN-680; ASN-692; ASN-718; ASN-936; ASN-970; ASN-1012; ASN-1122; ASN-1152 AND ASN-1171</scope>
    <scope>FUNCTION</scope>
</reference>
<feature type="signal peptide" evidence="4">
    <location>
        <begin position="1"/>
        <end position="29"/>
    </location>
</feature>
<feature type="chain" id="PRO_0000020923" description="Chaoptin">
    <location>
        <begin position="30"/>
        <end position="1315"/>
    </location>
</feature>
<feature type="repeat" description="LRR 1">
    <location>
        <begin position="80"/>
        <end position="101"/>
    </location>
</feature>
<feature type="repeat" description="LRR 2">
    <location>
        <begin position="103"/>
        <end position="124"/>
    </location>
</feature>
<feature type="repeat" description="LRR 3">
    <location>
        <begin position="128"/>
        <end position="149"/>
    </location>
</feature>
<feature type="repeat" description="LRR 4">
    <location>
        <begin position="152"/>
        <end position="173"/>
    </location>
</feature>
<feature type="repeat" description="LRR 5">
    <location>
        <begin position="177"/>
        <end position="198"/>
    </location>
</feature>
<feature type="repeat" description="LRR 6">
    <location>
        <begin position="201"/>
        <end position="222"/>
    </location>
</feature>
<feature type="repeat" description="LRR 7">
    <location>
        <begin position="226"/>
        <end position="247"/>
    </location>
</feature>
<feature type="repeat" description="LRR 8">
    <location>
        <begin position="250"/>
        <end position="271"/>
    </location>
</feature>
<feature type="repeat" description="LRR 9">
    <location>
        <begin position="279"/>
        <end position="300"/>
    </location>
</feature>
<feature type="repeat" description="LRR 10">
    <location>
        <begin position="326"/>
        <end position="347"/>
    </location>
</feature>
<feature type="repeat" description="LRR 11">
    <location>
        <begin position="351"/>
        <end position="372"/>
    </location>
</feature>
<feature type="repeat" description="LRR 12">
    <location>
        <begin position="375"/>
        <end position="396"/>
    </location>
</feature>
<feature type="repeat" description="LRR 13">
    <location>
        <begin position="401"/>
        <end position="424"/>
    </location>
</feature>
<feature type="repeat" description="LRR 14">
    <location>
        <begin position="477"/>
        <end position="498"/>
    </location>
</feature>
<feature type="repeat" description="LRR 15">
    <location>
        <begin position="527"/>
        <end position="548"/>
    </location>
</feature>
<feature type="repeat" description="LRR 16">
    <location>
        <begin position="551"/>
        <end position="572"/>
    </location>
</feature>
<feature type="repeat" description="LRR 17">
    <location>
        <begin position="577"/>
        <end position="598"/>
    </location>
</feature>
<feature type="repeat" description="LRR 18">
    <location>
        <begin position="601"/>
        <end position="622"/>
    </location>
</feature>
<feature type="repeat" description="LRR 19">
    <location>
        <begin position="625"/>
        <end position="646"/>
    </location>
</feature>
<feature type="repeat" description="LRR 20">
    <location>
        <begin position="649"/>
        <end position="670"/>
    </location>
</feature>
<feature type="repeat" description="LRR 21">
    <location>
        <begin position="676"/>
        <end position="696"/>
    </location>
</feature>
<feature type="repeat" description="LRR 22">
    <location>
        <begin position="708"/>
        <end position="729"/>
    </location>
</feature>
<feature type="repeat" description="LRR 23">
    <location>
        <begin position="733"/>
        <end position="754"/>
    </location>
</feature>
<feature type="repeat" description="LRR 24">
    <location>
        <begin position="757"/>
        <end position="778"/>
    </location>
</feature>
<feature type="repeat" description="LRR 25">
    <location>
        <begin position="781"/>
        <end position="802"/>
    </location>
</feature>
<feature type="repeat" description="LRR 26">
    <location>
        <begin position="805"/>
        <end position="826"/>
    </location>
</feature>
<feature type="repeat" description="LRR 27">
    <location>
        <begin position="828"/>
        <end position="849"/>
    </location>
</feature>
<feature type="repeat" description="LRR 28">
    <location>
        <begin position="854"/>
        <end position="875"/>
    </location>
</feature>
<feature type="repeat" description="LRR 29">
    <location>
        <begin position="879"/>
        <end position="900"/>
    </location>
</feature>
<feature type="repeat" description="LRR 30">
    <location>
        <begin position="903"/>
        <end position="924"/>
    </location>
</feature>
<feature type="repeat" description="LRR 31">
    <location>
        <begin position="928"/>
        <end position="948"/>
    </location>
</feature>
<feature type="repeat" description="LRR 32">
    <location>
        <begin position="949"/>
        <end position="970"/>
    </location>
</feature>
<feature type="repeat" description="LRR 33">
    <location>
        <begin position="973"/>
        <end position="994"/>
    </location>
</feature>
<feature type="repeat" description="LRR 34">
    <location>
        <begin position="996"/>
        <end position="1017"/>
    </location>
</feature>
<feature type="repeat" description="LRR 35">
    <location>
        <begin position="1021"/>
        <end position="1044"/>
    </location>
</feature>
<feature type="repeat" description="LRR 36">
    <location>
        <begin position="1045"/>
        <end position="1066"/>
    </location>
</feature>
<feature type="domain" description="LRRCT">
    <location>
        <begin position="1211"/>
        <end position="1274"/>
    </location>
</feature>
<feature type="glycosylation site" description="N-linked (GlcNAc...) (high mannose) asparagine; alternate" evidence="3">
    <location>
        <position position="77"/>
    </location>
</feature>
<feature type="glycosylation site" description="N-linked (GlcNAc...) (paucimannose) asparagine; alternate" evidence="3">
    <location>
        <position position="77"/>
    </location>
</feature>
<feature type="glycosylation site" description="N-linked (GlcNAc...) (complex) asparagine; alternate" evidence="3">
    <location>
        <position position="267"/>
    </location>
</feature>
<feature type="glycosylation site" description="N-linked (GlcNAc...) (paucimannose) asparagine; alternate" evidence="3">
    <location>
        <position position="267"/>
    </location>
</feature>
<feature type="glycosylation site" description="N-linked (GlcNAc...) (high mannose) asparagine; alternate" evidence="2 3">
    <location>
        <position position="305"/>
    </location>
</feature>
<feature type="glycosylation site" description="N-linked (GlcNAc...) (paucimannose) asparagine; alternate" evidence="2 3">
    <location>
        <position position="305"/>
    </location>
</feature>
<feature type="glycosylation site" description="N-linked (GlcNAc...) (high mannose) asparagine" evidence="3">
    <location>
        <position position="361"/>
    </location>
</feature>
<feature type="glycosylation site" description="N-linked (GlcNAc...) asparagine" evidence="3">
    <location>
        <position position="422"/>
    </location>
</feature>
<feature type="glycosylation site" description="N-linked (GlcNAc...) (high mannose) asparagine" evidence="3">
    <location>
        <position position="680"/>
    </location>
</feature>
<feature type="glycosylation site" description="N-linked (GlcNAc...) (high mannose) asparagine; alternate" evidence="2 3">
    <location>
        <position position="692"/>
    </location>
</feature>
<feature type="glycosylation site" description="N-linked (GlcNAc...) (paucimannose) asparagine; alternate" evidence="2 3">
    <location>
        <position position="692"/>
    </location>
</feature>
<feature type="glycosylation site" description="N-linked (GlcNAc...) (high mannose) asparagine" evidence="3">
    <location>
        <position position="718"/>
    </location>
</feature>
<feature type="glycosylation site" description="N-linked (GlcNAc...) asparagine" evidence="1">
    <location>
        <position position="746"/>
    </location>
</feature>
<feature type="glycosylation site" description="N-linked (GlcNAc...) (high mannose) asparagine" evidence="2 3">
    <location>
        <position position="936"/>
    </location>
</feature>
<feature type="glycosylation site" description="N-linked (GlcNAc...) (paucimannose) asparagine" evidence="3">
    <location>
        <position position="970"/>
    </location>
</feature>
<feature type="glycosylation site" description="N-linked (GlcNAc...) (complex) asparagine" evidence="3">
    <location>
        <position position="1012"/>
    </location>
</feature>
<feature type="glycosylation site" description="N-linked (GlcNAc...) (high mannose) asparagine" evidence="2 3">
    <location>
        <position position="1122"/>
    </location>
</feature>
<feature type="glycosylation site" description="N-linked (GlcNAc...) (high mannose) asparagine" evidence="3">
    <location>
        <position position="1152"/>
    </location>
</feature>
<feature type="glycosylation site" description="N-linked (GlcNAc...) (high mannose) asparagine" evidence="2 3">
    <location>
        <position position="1171"/>
    </location>
</feature>
<feature type="sequence conflict" description="In Ref. 1; AAA28425." evidence="5" ref="1">
    <original>A</original>
    <variation>V</variation>
    <location>
        <position position="12"/>
    </location>
</feature>
<feature type="sequence conflict" description="In Ref. 5; AA sequence." evidence="5" ref="5">
    <original>C</original>
    <variation>H</variation>
    <location>
        <position position="44"/>
    </location>
</feature>
<feature type="sequence conflict" description="In Ref. 5; AA sequence." evidence="5" ref="5">
    <original>C</original>
    <variation>H</variation>
    <location>
        <position position="50"/>
    </location>
</feature>
<feature type="sequence conflict" description="In Ref. 1; AAA28425." evidence="5" ref="1">
    <original>I</original>
    <variation>V</variation>
    <location>
        <position position="937"/>
    </location>
</feature>
<gene>
    <name type="primary">chp</name>
    <name type="synonym">CHT</name>
    <name type="ORF">CG1744</name>
</gene>